<proteinExistence type="inferred from homology"/>
<feature type="chain" id="PRO_1000202043" description="Crossover junction endodeoxyribonuclease RuvC">
    <location>
        <begin position="1"/>
        <end position="177"/>
    </location>
</feature>
<feature type="active site" evidence="1">
    <location>
        <position position="8"/>
    </location>
</feature>
<feature type="active site" evidence="1">
    <location>
        <position position="72"/>
    </location>
</feature>
<feature type="active site" evidence="1">
    <location>
        <position position="144"/>
    </location>
</feature>
<feature type="binding site" evidence="1">
    <location>
        <position position="8"/>
    </location>
    <ligand>
        <name>Mg(2+)</name>
        <dbReference type="ChEBI" id="CHEBI:18420"/>
        <label>1</label>
    </ligand>
</feature>
<feature type="binding site" evidence="1">
    <location>
        <position position="72"/>
    </location>
    <ligand>
        <name>Mg(2+)</name>
        <dbReference type="ChEBI" id="CHEBI:18420"/>
        <label>2</label>
    </ligand>
</feature>
<feature type="binding site" evidence="1">
    <location>
        <position position="144"/>
    </location>
    <ligand>
        <name>Mg(2+)</name>
        <dbReference type="ChEBI" id="CHEBI:18420"/>
        <label>1</label>
    </ligand>
</feature>
<reference key="1">
    <citation type="journal article" date="2009" name="PLoS ONE">
        <title>The complete genome of Teredinibacter turnerae T7901: an intracellular endosymbiont of marine wood-boring bivalves (shipworms).</title>
        <authorList>
            <person name="Yang J.C."/>
            <person name="Madupu R."/>
            <person name="Durkin A.S."/>
            <person name="Ekborg N.A."/>
            <person name="Pedamallu C.S."/>
            <person name="Hostetler J.B."/>
            <person name="Radune D."/>
            <person name="Toms B.S."/>
            <person name="Henrissat B."/>
            <person name="Coutinho P.M."/>
            <person name="Schwarz S."/>
            <person name="Field L."/>
            <person name="Trindade-Silva A.E."/>
            <person name="Soares C.A.G."/>
            <person name="Elshahawi S."/>
            <person name="Hanora A."/>
            <person name="Schmidt E.W."/>
            <person name="Haygood M.G."/>
            <person name="Posfai J."/>
            <person name="Benner J."/>
            <person name="Madinger C."/>
            <person name="Nove J."/>
            <person name="Anton B."/>
            <person name="Chaudhary K."/>
            <person name="Foster J."/>
            <person name="Holman A."/>
            <person name="Kumar S."/>
            <person name="Lessard P.A."/>
            <person name="Luyten Y.A."/>
            <person name="Slatko B."/>
            <person name="Wood N."/>
            <person name="Wu B."/>
            <person name="Teplitski M."/>
            <person name="Mougous J.D."/>
            <person name="Ward N."/>
            <person name="Eisen J.A."/>
            <person name="Badger J.H."/>
            <person name="Distel D.L."/>
        </authorList>
    </citation>
    <scope>NUCLEOTIDE SEQUENCE [LARGE SCALE GENOMIC DNA]</scope>
    <source>
        <strain>ATCC 39867 / T7901</strain>
    </source>
</reference>
<sequence length="177" mass="18888">MPLILGVDPGSRKMGYGIINATGSRLGYVASGVVRIPQPLLVADCLAERLKVIFDSLSEIIEQYQPQEFAIENVFMAKSAGSALKLGQARGAAIVAAVNKDLPVSEYEARKVKQAVVGTGAADKLQVQHMVCTLLKLSKAPAEDAADALAVAICHANSQQNLIRMAGARRYRRGRTV</sequence>
<accession>C5BQT6</accession>
<protein>
    <recommendedName>
        <fullName evidence="1">Crossover junction endodeoxyribonuclease RuvC</fullName>
        <ecNumber evidence="1">3.1.21.10</ecNumber>
    </recommendedName>
    <alternativeName>
        <fullName evidence="1">Holliday junction nuclease RuvC</fullName>
    </alternativeName>
    <alternativeName>
        <fullName evidence="1">Holliday junction resolvase RuvC</fullName>
    </alternativeName>
</protein>
<gene>
    <name evidence="1" type="primary">ruvC</name>
    <name type="ordered locus">TERTU_3436</name>
</gene>
<dbReference type="EC" id="3.1.21.10" evidence="1"/>
<dbReference type="EMBL" id="CP001614">
    <property type="protein sequence ID" value="ACR10762.1"/>
    <property type="molecule type" value="Genomic_DNA"/>
</dbReference>
<dbReference type="RefSeq" id="WP_015816874.1">
    <property type="nucleotide sequence ID" value="NC_012997.1"/>
</dbReference>
<dbReference type="SMR" id="C5BQT6"/>
<dbReference type="STRING" id="377629.TERTU_3436"/>
<dbReference type="KEGG" id="ttu:TERTU_3436"/>
<dbReference type="eggNOG" id="COG0817">
    <property type="taxonomic scope" value="Bacteria"/>
</dbReference>
<dbReference type="HOGENOM" id="CLU_091257_2_1_6"/>
<dbReference type="OrthoDB" id="9805499at2"/>
<dbReference type="Proteomes" id="UP000009080">
    <property type="component" value="Chromosome"/>
</dbReference>
<dbReference type="GO" id="GO:0005737">
    <property type="term" value="C:cytoplasm"/>
    <property type="evidence" value="ECO:0007669"/>
    <property type="project" value="UniProtKB-SubCell"/>
</dbReference>
<dbReference type="GO" id="GO:0048476">
    <property type="term" value="C:Holliday junction resolvase complex"/>
    <property type="evidence" value="ECO:0007669"/>
    <property type="project" value="UniProtKB-UniRule"/>
</dbReference>
<dbReference type="GO" id="GO:0008821">
    <property type="term" value="F:crossover junction DNA endonuclease activity"/>
    <property type="evidence" value="ECO:0007669"/>
    <property type="project" value="UniProtKB-UniRule"/>
</dbReference>
<dbReference type="GO" id="GO:0003677">
    <property type="term" value="F:DNA binding"/>
    <property type="evidence" value="ECO:0007669"/>
    <property type="project" value="UniProtKB-KW"/>
</dbReference>
<dbReference type="GO" id="GO:0000287">
    <property type="term" value="F:magnesium ion binding"/>
    <property type="evidence" value="ECO:0007669"/>
    <property type="project" value="UniProtKB-UniRule"/>
</dbReference>
<dbReference type="GO" id="GO:0006310">
    <property type="term" value="P:DNA recombination"/>
    <property type="evidence" value="ECO:0007669"/>
    <property type="project" value="UniProtKB-UniRule"/>
</dbReference>
<dbReference type="GO" id="GO:0006281">
    <property type="term" value="P:DNA repair"/>
    <property type="evidence" value="ECO:0007669"/>
    <property type="project" value="UniProtKB-UniRule"/>
</dbReference>
<dbReference type="CDD" id="cd16962">
    <property type="entry name" value="RuvC"/>
    <property type="match status" value="1"/>
</dbReference>
<dbReference type="FunFam" id="3.30.420.10:FF:000002">
    <property type="entry name" value="Crossover junction endodeoxyribonuclease RuvC"/>
    <property type="match status" value="1"/>
</dbReference>
<dbReference type="Gene3D" id="3.30.420.10">
    <property type="entry name" value="Ribonuclease H-like superfamily/Ribonuclease H"/>
    <property type="match status" value="1"/>
</dbReference>
<dbReference type="HAMAP" id="MF_00034">
    <property type="entry name" value="RuvC"/>
    <property type="match status" value="1"/>
</dbReference>
<dbReference type="InterPro" id="IPR012337">
    <property type="entry name" value="RNaseH-like_sf"/>
</dbReference>
<dbReference type="InterPro" id="IPR036397">
    <property type="entry name" value="RNaseH_sf"/>
</dbReference>
<dbReference type="InterPro" id="IPR020563">
    <property type="entry name" value="X-over_junc_endoDNase_Mg_BS"/>
</dbReference>
<dbReference type="InterPro" id="IPR002176">
    <property type="entry name" value="X-over_junc_endoDNase_RuvC"/>
</dbReference>
<dbReference type="NCBIfam" id="TIGR00228">
    <property type="entry name" value="ruvC"/>
    <property type="match status" value="1"/>
</dbReference>
<dbReference type="PANTHER" id="PTHR30194">
    <property type="entry name" value="CROSSOVER JUNCTION ENDODEOXYRIBONUCLEASE RUVC"/>
    <property type="match status" value="1"/>
</dbReference>
<dbReference type="PANTHER" id="PTHR30194:SF3">
    <property type="entry name" value="CROSSOVER JUNCTION ENDODEOXYRIBONUCLEASE RUVC"/>
    <property type="match status" value="1"/>
</dbReference>
<dbReference type="Pfam" id="PF02075">
    <property type="entry name" value="RuvC"/>
    <property type="match status" value="1"/>
</dbReference>
<dbReference type="PRINTS" id="PR00696">
    <property type="entry name" value="RSOLVASERUVC"/>
</dbReference>
<dbReference type="SUPFAM" id="SSF53098">
    <property type="entry name" value="Ribonuclease H-like"/>
    <property type="match status" value="1"/>
</dbReference>
<dbReference type="PROSITE" id="PS01321">
    <property type="entry name" value="RUVC"/>
    <property type="match status" value="1"/>
</dbReference>
<comment type="function">
    <text evidence="1">The RuvA-RuvB-RuvC complex processes Holliday junction (HJ) DNA during genetic recombination and DNA repair. Endonuclease that resolves HJ intermediates. Cleaves cruciform DNA by making single-stranded nicks across the HJ at symmetrical positions within the homologous arms, yielding a 5'-phosphate and a 3'-hydroxyl group; requires a central core of homology in the junction. The consensus cleavage sequence is 5'-(A/T)TT(C/G)-3'. Cleavage occurs on the 3'-side of the TT dinucleotide at the point of strand exchange. HJ branch migration catalyzed by RuvA-RuvB allows RuvC to scan DNA until it finds its consensus sequence, where it cleaves and resolves the cruciform DNA.</text>
</comment>
<comment type="catalytic activity">
    <reaction evidence="1">
        <text>Endonucleolytic cleavage at a junction such as a reciprocal single-stranded crossover between two homologous DNA duplexes (Holliday junction).</text>
        <dbReference type="EC" id="3.1.21.10"/>
    </reaction>
</comment>
<comment type="cofactor">
    <cofactor evidence="1">
        <name>Mg(2+)</name>
        <dbReference type="ChEBI" id="CHEBI:18420"/>
    </cofactor>
    <text evidence="1">Binds 2 Mg(2+) ion per subunit.</text>
</comment>
<comment type="subunit">
    <text evidence="1">Homodimer which binds Holliday junction (HJ) DNA. The HJ becomes 2-fold symmetrical on binding to RuvC with unstacked arms; it has a different conformation from HJ DNA in complex with RuvA. In the full resolvosome a probable DNA-RuvA(4)-RuvB(12)-RuvC(2) complex forms which resolves the HJ.</text>
</comment>
<comment type="subcellular location">
    <subcellularLocation>
        <location evidence="1">Cytoplasm</location>
    </subcellularLocation>
</comment>
<comment type="similarity">
    <text evidence="1">Belongs to the RuvC family.</text>
</comment>
<organism>
    <name type="scientific">Teredinibacter turnerae (strain ATCC 39867 / T7901)</name>
    <dbReference type="NCBI Taxonomy" id="377629"/>
    <lineage>
        <taxon>Bacteria</taxon>
        <taxon>Pseudomonadati</taxon>
        <taxon>Pseudomonadota</taxon>
        <taxon>Gammaproteobacteria</taxon>
        <taxon>Cellvibrionales</taxon>
        <taxon>Cellvibrionaceae</taxon>
        <taxon>Teredinibacter</taxon>
    </lineage>
</organism>
<keyword id="KW-0963">Cytoplasm</keyword>
<keyword id="KW-0227">DNA damage</keyword>
<keyword id="KW-0233">DNA recombination</keyword>
<keyword id="KW-0234">DNA repair</keyword>
<keyword id="KW-0238">DNA-binding</keyword>
<keyword id="KW-0255">Endonuclease</keyword>
<keyword id="KW-0378">Hydrolase</keyword>
<keyword id="KW-0460">Magnesium</keyword>
<keyword id="KW-0479">Metal-binding</keyword>
<keyword id="KW-0540">Nuclease</keyword>
<keyword id="KW-1185">Reference proteome</keyword>
<evidence type="ECO:0000255" key="1">
    <source>
        <dbReference type="HAMAP-Rule" id="MF_00034"/>
    </source>
</evidence>
<name>RUVC_TERTT</name>